<evidence type="ECO:0000250" key="1"/>
<evidence type="ECO:0000255" key="2"/>
<evidence type="ECO:0000255" key="3">
    <source>
        <dbReference type="PROSITE-ProRule" id="PRU00143"/>
    </source>
</evidence>
<evidence type="ECO:0000269" key="4">
    <source>
    </source>
</evidence>
<evidence type="ECO:0000269" key="5">
    <source>
    </source>
</evidence>
<evidence type="ECO:0000305" key="6"/>
<proteinExistence type="evidence at protein level"/>
<feature type="chain" id="PRO_0000093861" description="Serine protease Do-like HtrA">
    <location>
        <begin position="1"/>
        <end position="408"/>
    </location>
</feature>
<feature type="transmembrane region" description="Helical" evidence="2">
    <location>
        <begin position="6"/>
        <end position="26"/>
    </location>
</feature>
<feature type="domain" description="PDZ" evidence="3">
    <location>
        <begin position="302"/>
        <end position="383"/>
    </location>
</feature>
<feature type="active site" description="Charge relay system" evidence="2">
    <location>
        <position position="127"/>
    </location>
</feature>
<feature type="active site" description="Charge relay system" evidence="2">
    <location>
        <position position="157"/>
    </location>
</feature>
<feature type="active site" description="Charge relay system" evidence="2">
    <location>
        <position position="239"/>
    </location>
</feature>
<feature type="binding site" evidence="1">
    <location>
        <begin position="237"/>
        <end position="239"/>
    </location>
    <ligand>
        <name>substrate</name>
    </ligand>
</feature>
<feature type="binding site" evidence="1">
    <location>
        <begin position="298"/>
        <end position="302"/>
    </location>
    <ligand>
        <name>substrate</name>
    </ligand>
</feature>
<protein>
    <recommendedName>
        <fullName>Serine protease Do-like HtrA</fullName>
        <ecNumber>3.4.21.107</ecNumber>
    </recommendedName>
</protein>
<name>HTRA_LACLA</name>
<keyword id="KW-1003">Cell membrane</keyword>
<keyword id="KW-0378">Hydrolase</keyword>
<keyword id="KW-0472">Membrane</keyword>
<keyword id="KW-0645">Protease</keyword>
<keyword id="KW-1185">Reference proteome</keyword>
<keyword id="KW-0720">Serine protease</keyword>
<keyword id="KW-0346">Stress response</keyword>
<keyword id="KW-0812">Transmembrane</keyword>
<keyword id="KW-1133">Transmembrane helix</keyword>
<dbReference type="EC" id="3.4.21.107"/>
<dbReference type="EMBL" id="AF155705">
    <property type="protein sequence ID" value="AAF61294.1"/>
    <property type="molecule type" value="Genomic_DNA"/>
</dbReference>
<dbReference type="EMBL" id="AE005176">
    <property type="protein sequence ID" value="AAK06234.1"/>
    <property type="molecule type" value="Genomic_DNA"/>
</dbReference>
<dbReference type="PIR" id="H86891">
    <property type="entry name" value="H86891"/>
</dbReference>
<dbReference type="RefSeq" id="NP_268293.1">
    <property type="nucleotide sequence ID" value="NC_002662.1"/>
</dbReference>
<dbReference type="RefSeq" id="WP_010906329.1">
    <property type="nucleotide sequence ID" value="NC_002662.1"/>
</dbReference>
<dbReference type="SMR" id="Q9LA06"/>
<dbReference type="MEROPS" id="S01.447"/>
<dbReference type="PaxDb" id="272623-L187771"/>
<dbReference type="EnsemblBacteria" id="AAK06234">
    <property type="protein sequence ID" value="AAK06234"/>
    <property type="gene ID" value="L187771"/>
</dbReference>
<dbReference type="KEGG" id="lla:L187771"/>
<dbReference type="PATRIC" id="fig|272623.7.peg.2295"/>
<dbReference type="eggNOG" id="COG0265">
    <property type="taxonomic scope" value="Bacteria"/>
</dbReference>
<dbReference type="HOGENOM" id="CLU_020120_0_2_9"/>
<dbReference type="OrthoDB" id="9758917at2"/>
<dbReference type="BRENDA" id="3.4.21.107">
    <property type="organism ID" value="2903"/>
</dbReference>
<dbReference type="Proteomes" id="UP000002196">
    <property type="component" value="Chromosome"/>
</dbReference>
<dbReference type="GO" id="GO:0005886">
    <property type="term" value="C:plasma membrane"/>
    <property type="evidence" value="ECO:0007669"/>
    <property type="project" value="UniProtKB-SubCell"/>
</dbReference>
<dbReference type="GO" id="GO:0004252">
    <property type="term" value="F:serine-type endopeptidase activity"/>
    <property type="evidence" value="ECO:0007669"/>
    <property type="project" value="InterPro"/>
</dbReference>
<dbReference type="GO" id="GO:0006508">
    <property type="term" value="P:proteolysis"/>
    <property type="evidence" value="ECO:0007669"/>
    <property type="project" value="UniProtKB-KW"/>
</dbReference>
<dbReference type="GO" id="GO:0009266">
    <property type="term" value="P:response to temperature stimulus"/>
    <property type="evidence" value="ECO:0000315"/>
    <property type="project" value="UniProtKB"/>
</dbReference>
<dbReference type="CDD" id="cd06781">
    <property type="entry name" value="cpPDZ_BsHtra-like"/>
    <property type="match status" value="1"/>
</dbReference>
<dbReference type="Gene3D" id="2.30.42.10">
    <property type="match status" value="1"/>
</dbReference>
<dbReference type="Gene3D" id="2.40.10.10">
    <property type="entry name" value="Trypsin-like serine proteases"/>
    <property type="match status" value="2"/>
</dbReference>
<dbReference type="InterPro" id="IPR051201">
    <property type="entry name" value="Chloro_Bact_Ser_Proteases"/>
</dbReference>
<dbReference type="InterPro" id="IPR001478">
    <property type="entry name" value="PDZ"/>
</dbReference>
<dbReference type="InterPro" id="IPR036034">
    <property type="entry name" value="PDZ_sf"/>
</dbReference>
<dbReference type="InterPro" id="IPR009003">
    <property type="entry name" value="Peptidase_S1_PA"/>
</dbReference>
<dbReference type="InterPro" id="IPR043504">
    <property type="entry name" value="Peptidase_S1_PA_chymotrypsin"/>
</dbReference>
<dbReference type="InterPro" id="IPR001940">
    <property type="entry name" value="Peptidase_S1C"/>
</dbReference>
<dbReference type="PANTHER" id="PTHR43343">
    <property type="entry name" value="PEPTIDASE S12"/>
    <property type="match status" value="1"/>
</dbReference>
<dbReference type="PANTHER" id="PTHR43343:SF3">
    <property type="entry name" value="PROTEASE DO-LIKE 8, CHLOROPLASTIC"/>
    <property type="match status" value="1"/>
</dbReference>
<dbReference type="Pfam" id="PF13180">
    <property type="entry name" value="PDZ_2"/>
    <property type="match status" value="1"/>
</dbReference>
<dbReference type="Pfam" id="PF13365">
    <property type="entry name" value="Trypsin_2"/>
    <property type="match status" value="1"/>
</dbReference>
<dbReference type="PRINTS" id="PR00834">
    <property type="entry name" value="PROTEASES2C"/>
</dbReference>
<dbReference type="SMART" id="SM00228">
    <property type="entry name" value="PDZ"/>
    <property type="match status" value="1"/>
</dbReference>
<dbReference type="SUPFAM" id="SSF50156">
    <property type="entry name" value="PDZ domain-like"/>
    <property type="match status" value="1"/>
</dbReference>
<dbReference type="SUPFAM" id="SSF50494">
    <property type="entry name" value="Trypsin-like serine proteases"/>
    <property type="match status" value="1"/>
</dbReference>
<dbReference type="PROSITE" id="PS50106">
    <property type="entry name" value="PDZ"/>
    <property type="match status" value="1"/>
</dbReference>
<comment type="function">
    <text evidence="4 5">Degrades abnormal exported proteins and responsible for the propeptide processing of a natural pro-protein and for the maturation of a native protein. It also plays a prominent role in stress (heat shock, ethanol, puromycin and NaCl) resistance during active exponential growth.</text>
</comment>
<comment type="catalytic activity">
    <reaction>
        <text>Acts on substrates that are at least partially unfolded. The cleavage site P1 residue is normally between a pair of hydrophobic residues, such as Val-|-Val.</text>
        <dbReference type="EC" id="3.4.21.107"/>
    </reaction>
</comment>
<comment type="subcellular location">
    <subcellularLocation>
        <location evidence="6">Cell membrane</location>
        <topology evidence="6">Single-pass membrane protein</topology>
    </subcellularLocation>
</comment>
<comment type="induction">
    <text evidence="5">Induced during stress conditions.</text>
</comment>
<comment type="disruption phenotype">
    <text evidence="4 5">Inactivation leads to growth thermo-sensitivity and reduce the efficiency of secretion of the recombinant protein produced, although the protein produced is completely stabilized. Cells lacking this gene show an alteration of surface properties.</text>
</comment>
<comment type="similarity">
    <text evidence="6">Belongs to the peptidase S1C family.</text>
</comment>
<reference key="1">
    <citation type="journal article" date="2000" name="Mol. Microbiol.">
        <title>HtrA is the unique surface housekeeping protease in Lactococcus lactis and is required for natural protein processing.</title>
        <authorList>
            <person name="Poquet I."/>
            <person name="Saint V."/>
            <person name="Seznec E."/>
            <person name="Simoes N."/>
            <person name="Bolotin A."/>
            <person name="Gruss A."/>
        </authorList>
    </citation>
    <scope>NUCLEOTIDE SEQUENCE [GENOMIC DNA]</scope>
    <scope>FUNCTION AS A HOUSEKEEPING PROTEASE</scope>
    <scope>DISRUPTION PHENOTYPE</scope>
    <source>
        <strain>IL1403</strain>
    </source>
</reference>
<reference key="2">
    <citation type="journal article" date="2001" name="Genome Res.">
        <title>The complete genome sequence of the lactic acid bacterium Lactococcus lactis ssp. lactis IL1403.</title>
        <authorList>
            <person name="Bolotin A."/>
            <person name="Wincker P."/>
            <person name="Mauger S."/>
            <person name="Jaillon O."/>
            <person name="Malarme K."/>
            <person name="Weissenbach J."/>
            <person name="Ehrlich S.D."/>
            <person name="Sorokin A."/>
        </authorList>
    </citation>
    <scope>NUCLEOTIDE SEQUENCE [LARGE SCALE GENOMIC DNA]</scope>
    <source>
        <strain>IL1403</strain>
    </source>
</reference>
<reference key="3">
    <citation type="journal article" date="2003" name="FEMS Microbiol. Lett.">
        <title>HtrA is a key factor in the response to specific stress conditions in Lactococcus lactis.</title>
        <authorList>
            <person name="Foucaud-Scheunemann C."/>
            <person name="Poquet I."/>
        </authorList>
    </citation>
    <scope>FUNCTION IN THE RESPONSE TO SPECIFIC STRESS CONDITIONS</scope>
    <scope>INDUCTION</scope>
    <scope>DISRUPTION PHENOTYPE</scope>
</reference>
<organism>
    <name type="scientific">Lactococcus lactis subsp. lactis (strain IL1403)</name>
    <name type="common">Streptococcus lactis</name>
    <dbReference type="NCBI Taxonomy" id="272623"/>
    <lineage>
        <taxon>Bacteria</taxon>
        <taxon>Bacillati</taxon>
        <taxon>Bacillota</taxon>
        <taxon>Bacilli</taxon>
        <taxon>Lactobacillales</taxon>
        <taxon>Streptococcaceae</taxon>
        <taxon>Lactococcus</taxon>
    </lineage>
</organism>
<gene>
    <name type="primary">htrA</name>
    <name type="ordered locus">LL2136</name>
    <name type="ORF">L187771</name>
</gene>
<sequence>MAKANIGKLLLTGVVGGAIALGGSAIYQSTTNQSANNSRSNTTSTKVSNVSVNVNTDVTSAIKKVSNSVVSVMNYQKDNSQSSDFSSIFGGNSGSSSSTDGLQLSSEGSGVIYKKSGGDAYVVTNYHVIAGNSSLDVLLSGGQKVKASVVGYDEYTDLAVLKISSEHVKDVATFADSSKLTIGEPAIAVGSPLGSQFANTATEGILSATSRQVTLTQENGQTTNINAIQTDAAINPGNSGGALINIEGQVIGITQSKITTTEDGSTSVEGLGFAIPSNDVVNIINKLEADGKISRPALGIRMVDLSQLSTNDSSQLKLPSSVTGGVVVYSVQSGLPAASAGLKAGDVITKVGDTAVTSSTDLQSALYSHNINDTVKVTYYRDGKSNTADVKLSKSTSDLETSSPSSSN</sequence>
<accession>Q9LA06</accession>